<organism>
    <name type="scientific">Mycoplasmoides gallisepticum (strain R(low / passage 15 / clone 2))</name>
    <name type="common">Mycoplasma gallisepticum</name>
    <dbReference type="NCBI Taxonomy" id="710127"/>
    <lineage>
        <taxon>Bacteria</taxon>
        <taxon>Bacillati</taxon>
        <taxon>Mycoplasmatota</taxon>
        <taxon>Mycoplasmoidales</taxon>
        <taxon>Mycoplasmoidaceae</taxon>
        <taxon>Mycoplasmoides</taxon>
    </lineage>
</organism>
<feature type="chain" id="PRO_0000344909" description="Ribonuclease Y">
    <location>
        <begin position="1"/>
        <end position="593"/>
    </location>
</feature>
<feature type="transmembrane region" description="Helical" evidence="1">
    <location>
        <begin position="6"/>
        <end position="26"/>
    </location>
</feature>
<feature type="domain" description="KH" evidence="1">
    <location>
        <begin position="218"/>
        <end position="278"/>
    </location>
</feature>
<feature type="domain" description="HD" evidence="2">
    <location>
        <begin position="354"/>
        <end position="464"/>
    </location>
</feature>
<keyword id="KW-1003">Cell membrane</keyword>
<keyword id="KW-0255">Endonuclease</keyword>
<keyword id="KW-0378">Hydrolase</keyword>
<keyword id="KW-0472">Membrane</keyword>
<keyword id="KW-0540">Nuclease</keyword>
<keyword id="KW-1185">Reference proteome</keyword>
<keyword id="KW-0694">RNA-binding</keyword>
<keyword id="KW-0812">Transmembrane</keyword>
<keyword id="KW-1133">Transmembrane helix</keyword>
<evidence type="ECO:0000255" key="1">
    <source>
        <dbReference type="HAMAP-Rule" id="MF_00335"/>
    </source>
</evidence>
<evidence type="ECO:0000255" key="2">
    <source>
        <dbReference type="PROSITE-ProRule" id="PRU01175"/>
    </source>
</evidence>
<comment type="function">
    <text evidence="1">Endoribonuclease that initiates mRNA decay.</text>
</comment>
<comment type="subcellular location">
    <subcellularLocation>
        <location evidence="1">Cell membrane</location>
        <topology evidence="1">Single-pass membrane protein</topology>
    </subcellularLocation>
</comment>
<comment type="similarity">
    <text evidence="1">Belongs to the RNase Y family.</text>
</comment>
<protein>
    <recommendedName>
        <fullName evidence="1">Ribonuclease Y</fullName>
        <shortName evidence="1">RNase Y</shortName>
        <ecNumber evidence="1">3.1.-.-</ecNumber>
    </recommendedName>
</protein>
<accession>Q7NB09</accession>
<name>RNY_MYCGA</name>
<reference key="1">
    <citation type="journal article" date="2003" name="Microbiology">
        <title>The complete genome sequence of the avian pathogen Mycoplasma gallisepticum strain R(low).</title>
        <authorList>
            <person name="Papazisi L."/>
            <person name="Gorton T.S."/>
            <person name="Kutish G."/>
            <person name="Markham P.F."/>
            <person name="Browning G.F."/>
            <person name="Nguyen D.K."/>
            <person name="Swartzell S."/>
            <person name="Madan A."/>
            <person name="Mahairas G."/>
            <person name="Geary S.J."/>
        </authorList>
    </citation>
    <scope>NUCLEOTIDE SEQUENCE [LARGE SCALE GENOMIC DNA]</scope>
    <source>
        <strain>R(low / passage 15 / clone 2)</strain>
    </source>
</reference>
<proteinExistence type="inferred from homology"/>
<dbReference type="EC" id="3.1.-.-" evidence="1"/>
<dbReference type="EMBL" id="AE015450">
    <property type="protein sequence ID" value="AAP56821.2"/>
    <property type="molecule type" value="Genomic_DNA"/>
</dbReference>
<dbReference type="RefSeq" id="WP_011113720.1">
    <property type="nucleotide sequence ID" value="NC_004829.2"/>
</dbReference>
<dbReference type="SMR" id="Q7NB09"/>
<dbReference type="KEGG" id="mga:MGA_0141"/>
<dbReference type="PATRIC" id="fig|233150.7.peg.529"/>
<dbReference type="HOGENOM" id="CLU_459917_0_0_14"/>
<dbReference type="OrthoDB" id="9803205at2"/>
<dbReference type="Proteomes" id="UP000001418">
    <property type="component" value="Chromosome"/>
</dbReference>
<dbReference type="GO" id="GO:0005886">
    <property type="term" value="C:plasma membrane"/>
    <property type="evidence" value="ECO:0007669"/>
    <property type="project" value="UniProtKB-SubCell"/>
</dbReference>
<dbReference type="GO" id="GO:0003723">
    <property type="term" value="F:RNA binding"/>
    <property type="evidence" value="ECO:0007669"/>
    <property type="project" value="UniProtKB-UniRule"/>
</dbReference>
<dbReference type="GO" id="GO:0004521">
    <property type="term" value="F:RNA endonuclease activity"/>
    <property type="evidence" value="ECO:0007669"/>
    <property type="project" value="UniProtKB-UniRule"/>
</dbReference>
<dbReference type="GO" id="GO:0006402">
    <property type="term" value="P:mRNA catabolic process"/>
    <property type="evidence" value="ECO:0007669"/>
    <property type="project" value="UniProtKB-UniRule"/>
</dbReference>
<dbReference type="CDD" id="cd00077">
    <property type="entry name" value="HDc"/>
    <property type="match status" value="1"/>
</dbReference>
<dbReference type="Gene3D" id="1.10.3210.10">
    <property type="entry name" value="Hypothetical protein af1432"/>
    <property type="match status" value="1"/>
</dbReference>
<dbReference type="HAMAP" id="MF_00335">
    <property type="entry name" value="RNase_Y"/>
    <property type="match status" value="1"/>
</dbReference>
<dbReference type="InterPro" id="IPR051094">
    <property type="entry name" value="Diverse_Catalytic_Enzymes"/>
</dbReference>
<dbReference type="InterPro" id="IPR003607">
    <property type="entry name" value="HD/PDEase_dom"/>
</dbReference>
<dbReference type="InterPro" id="IPR006674">
    <property type="entry name" value="HD_domain"/>
</dbReference>
<dbReference type="InterPro" id="IPR006675">
    <property type="entry name" value="HDIG_dom"/>
</dbReference>
<dbReference type="InterPro" id="IPR004087">
    <property type="entry name" value="KH_dom"/>
</dbReference>
<dbReference type="InterPro" id="IPR036612">
    <property type="entry name" value="KH_dom_type_1_sf"/>
</dbReference>
<dbReference type="InterPro" id="IPR017705">
    <property type="entry name" value="Ribonuclease_Y"/>
</dbReference>
<dbReference type="NCBIfam" id="TIGR00277">
    <property type="entry name" value="HDIG"/>
    <property type="match status" value="1"/>
</dbReference>
<dbReference type="PANTHER" id="PTHR35795:SF1">
    <property type="entry name" value="BIS(5'-NUCLEOSYL)-TETRAPHOSPHATASE, SYMMETRICAL"/>
    <property type="match status" value="1"/>
</dbReference>
<dbReference type="PANTHER" id="PTHR35795">
    <property type="entry name" value="SLR1885 PROTEIN"/>
    <property type="match status" value="1"/>
</dbReference>
<dbReference type="Pfam" id="PF01966">
    <property type="entry name" value="HD"/>
    <property type="match status" value="1"/>
</dbReference>
<dbReference type="SMART" id="SM00471">
    <property type="entry name" value="HDc"/>
    <property type="match status" value="1"/>
</dbReference>
<dbReference type="SMART" id="SM00322">
    <property type="entry name" value="KH"/>
    <property type="match status" value="1"/>
</dbReference>
<dbReference type="SUPFAM" id="SSF54791">
    <property type="entry name" value="Eukaryotic type KH-domain (KH-domain type I)"/>
    <property type="match status" value="1"/>
</dbReference>
<dbReference type="SUPFAM" id="SSF109604">
    <property type="entry name" value="HD-domain/PDEase-like"/>
    <property type="match status" value="1"/>
</dbReference>
<dbReference type="PROSITE" id="PS51831">
    <property type="entry name" value="HD"/>
    <property type="match status" value="1"/>
</dbReference>
<sequence>MITISILLMYLIVGLLTALTVLIFVFILLKFYEFRFFKQTETYQRELEQEILKINNQEELEEKLKEHYLFQSNHKVFTKRDLREIRNFFIAVLSDKILLENKNKLLSNEIIEKKKENEELKTKLDAKKVEEKITLLKEMNLTHEEAKKRLLEEYRGYVRNDLDKMVKEEEKAANDKKNAITNELNKLLINAMGNVSLLTETVRMNTVKTIKYEYVDVDPIKVKKVTDDFFGKIIGKEARNKKYIERLFNVEIIIKPESSRISISSFNTIKLEVAYNALNKIIEAVNDQGTHVLDESLIRKSWYGALNEFSAEAKRIGEETLKELGLYESAFIPTKEISEFIGRLKFRGSNTQNVLTHSIEAAQIAESIADQLNLNKEKAKVCALLHDIGKAIDKESVSSEGKWKNLKYAANDHVSAGVEIAQYYKFDIDIIDAINCHHGRKKIYEKSKNFYAKITKIADFLSAARPGVRFVKDNDIERRFDTISNILTKYVDEKIISTYKILKNGYNINLMINPDITESEYSQLTLDLKKDIESDKELSKYPITITYVQNITRSETTNAIAHAKKTVEIYSEDKAELVNDEELSTVEFLDEDI</sequence>
<gene>
    <name evidence="1" type="primary">rny</name>
    <name type="ordered locus">MYCGA4710</name>
    <name type="ORF">MGA_0141</name>
</gene>